<comment type="function">
    <text evidence="1">NDH-1 shuttles electrons from an unknown electron donor, via FMN and iron-sulfur (Fe-S) centers, to quinones in the respiratory and/or the photosynthetic chain. The immediate electron acceptor for the enzyme in this species is believed to be plastoquinone. Couples the redox reaction to proton translocation, and thus conserves the redox energy in a proton gradient.</text>
</comment>
<comment type="catalytic activity">
    <reaction evidence="1">
        <text>a plastoquinone + NADH + (n+1) H(+)(in) = a plastoquinol + NAD(+) + n H(+)(out)</text>
        <dbReference type="Rhea" id="RHEA:42608"/>
        <dbReference type="Rhea" id="RHEA-COMP:9561"/>
        <dbReference type="Rhea" id="RHEA-COMP:9562"/>
        <dbReference type="ChEBI" id="CHEBI:15378"/>
        <dbReference type="ChEBI" id="CHEBI:17757"/>
        <dbReference type="ChEBI" id="CHEBI:57540"/>
        <dbReference type="ChEBI" id="CHEBI:57945"/>
        <dbReference type="ChEBI" id="CHEBI:62192"/>
    </reaction>
</comment>
<comment type="catalytic activity">
    <reaction evidence="1">
        <text>a plastoquinone + NADPH + (n+1) H(+)(in) = a plastoquinol + NADP(+) + n H(+)(out)</text>
        <dbReference type="Rhea" id="RHEA:42612"/>
        <dbReference type="Rhea" id="RHEA-COMP:9561"/>
        <dbReference type="Rhea" id="RHEA-COMP:9562"/>
        <dbReference type="ChEBI" id="CHEBI:15378"/>
        <dbReference type="ChEBI" id="CHEBI:17757"/>
        <dbReference type="ChEBI" id="CHEBI:57783"/>
        <dbReference type="ChEBI" id="CHEBI:58349"/>
        <dbReference type="ChEBI" id="CHEBI:62192"/>
    </reaction>
</comment>
<comment type="cofactor">
    <cofactor evidence="1">
        <name>[4Fe-4S] cluster</name>
        <dbReference type="ChEBI" id="CHEBI:49883"/>
    </cofactor>
    <text evidence="1">Binds 2 [4Fe-4S] clusters per subunit.</text>
</comment>
<comment type="subunit">
    <text evidence="1">NDH-1 is composed of at least 11 different subunits.</text>
</comment>
<comment type="subcellular location">
    <subcellularLocation>
        <location evidence="1">Cellular thylakoid membrane</location>
        <topology evidence="1">Peripheral membrane protein</topology>
    </subcellularLocation>
</comment>
<comment type="similarity">
    <text evidence="1">Belongs to the complex I 23 kDa subunit family.</text>
</comment>
<accession>B7K0U6</accession>
<evidence type="ECO:0000255" key="1">
    <source>
        <dbReference type="HAMAP-Rule" id="MF_01351"/>
    </source>
</evidence>
<evidence type="ECO:0000256" key="2">
    <source>
        <dbReference type="SAM" id="MobiDB-lite"/>
    </source>
</evidence>
<sequence>MFNLLKQVSDYAKESIEAAKYIGQGLSVTFDHMRRRPVTVQYPYEKLIPSERFRGRIHFEFDKCIACEVCVRVCPINLPVVDWEFNKAVKKKELKHYSIDFGVCIFCGNCVEYCPTNCLSMTEEYELATYDRHELNYDNVALGRLPYKVTEDPMVTPLRELGYLPKGVLDPHDLPSGNQRSGKRPEEIIAESD</sequence>
<name>NDHI_RIPO1</name>
<organism>
    <name type="scientific">Rippkaea orientalis (strain PCC 8801 / RF-1)</name>
    <name type="common">Cyanothece sp. (strain PCC 8801)</name>
    <dbReference type="NCBI Taxonomy" id="41431"/>
    <lineage>
        <taxon>Bacteria</taxon>
        <taxon>Bacillati</taxon>
        <taxon>Cyanobacteriota</taxon>
        <taxon>Cyanophyceae</taxon>
        <taxon>Oscillatoriophycideae</taxon>
        <taxon>Chroococcales</taxon>
        <taxon>Aphanothecaceae</taxon>
        <taxon>Rippkaea</taxon>
        <taxon>Rippkaea orientalis</taxon>
    </lineage>
</organism>
<gene>
    <name evidence="1" type="primary">ndhI</name>
    <name type="ordered locus">PCC8801_1011</name>
</gene>
<keyword id="KW-0004">4Fe-4S</keyword>
<keyword id="KW-0408">Iron</keyword>
<keyword id="KW-0411">Iron-sulfur</keyword>
<keyword id="KW-0472">Membrane</keyword>
<keyword id="KW-0479">Metal-binding</keyword>
<keyword id="KW-0520">NAD</keyword>
<keyword id="KW-0521">NADP</keyword>
<keyword id="KW-0618">Plastoquinone</keyword>
<keyword id="KW-0874">Quinone</keyword>
<keyword id="KW-1185">Reference proteome</keyword>
<keyword id="KW-0677">Repeat</keyword>
<keyword id="KW-0793">Thylakoid</keyword>
<keyword id="KW-1278">Translocase</keyword>
<proteinExistence type="inferred from homology"/>
<protein>
    <recommendedName>
        <fullName evidence="1">NAD(P)H-quinone oxidoreductase subunit I</fullName>
        <ecNumber evidence="1">7.1.1.-</ecNumber>
    </recommendedName>
    <alternativeName>
        <fullName evidence="1">NAD(P)H dehydrogenase I subunit I</fullName>
    </alternativeName>
    <alternativeName>
        <fullName evidence="1">NDH-1 subunit I</fullName>
        <shortName evidence="1">NDH-I</shortName>
    </alternativeName>
</protein>
<dbReference type="EC" id="7.1.1.-" evidence="1"/>
<dbReference type="EMBL" id="CP001287">
    <property type="protein sequence ID" value="ACK65087.1"/>
    <property type="molecule type" value="Genomic_DNA"/>
</dbReference>
<dbReference type="RefSeq" id="WP_012594362.1">
    <property type="nucleotide sequence ID" value="NC_011726.1"/>
</dbReference>
<dbReference type="SMR" id="B7K0U6"/>
<dbReference type="STRING" id="41431.PCC8801_1011"/>
<dbReference type="KEGG" id="cyp:PCC8801_1011"/>
<dbReference type="eggNOG" id="COG1143">
    <property type="taxonomic scope" value="Bacteria"/>
</dbReference>
<dbReference type="HOGENOM" id="CLU_122804_0_0_3"/>
<dbReference type="OrthoDB" id="9798098at2"/>
<dbReference type="Proteomes" id="UP000008204">
    <property type="component" value="Chromosome"/>
</dbReference>
<dbReference type="GO" id="GO:0031676">
    <property type="term" value="C:plasma membrane-derived thylakoid membrane"/>
    <property type="evidence" value="ECO:0007669"/>
    <property type="project" value="UniProtKB-SubCell"/>
</dbReference>
<dbReference type="GO" id="GO:0051539">
    <property type="term" value="F:4 iron, 4 sulfur cluster binding"/>
    <property type="evidence" value="ECO:0007669"/>
    <property type="project" value="UniProtKB-KW"/>
</dbReference>
<dbReference type="GO" id="GO:0005506">
    <property type="term" value="F:iron ion binding"/>
    <property type="evidence" value="ECO:0007669"/>
    <property type="project" value="UniProtKB-UniRule"/>
</dbReference>
<dbReference type="GO" id="GO:0008137">
    <property type="term" value="F:NADH dehydrogenase (ubiquinone) activity"/>
    <property type="evidence" value="ECO:0007669"/>
    <property type="project" value="InterPro"/>
</dbReference>
<dbReference type="GO" id="GO:0048038">
    <property type="term" value="F:quinone binding"/>
    <property type="evidence" value="ECO:0007669"/>
    <property type="project" value="UniProtKB-KW"/>
</dbReference>
<dbReference type="GO" id="GO:0019684">
    <property type="term" value="P:photosynthesis, light reaction"/>
    <property type="evidence" value="ECO:0007669"/>
    <property type="project" value="UniProtKB-UniRule"/>
</dbReference>
<dbReference type="Gene3D" id="3.30.70.3270">
    <property type="match status" value="1"/>
</dbReference>
<dbReference type="HAMAP" id="MF_01351">
    <property type="entry name" value="NDH1_NuoI"/>
    <property type="match status" value="1"/>
</dbReference>
<dbReference type="InterPro" id="IPR017896">
    <property type="entry name" value="4Fe4S_Fe-S-bd"/>
</dbReference>
<dbReference type="InterPro" id="IPR017900">
    <property type="entry name" value="4Fe4S_Fe_S_CS"/>
</dbReference>
<dbReference type="InterPro" id="IPR010226">
    <property type="entry name" value="NADH_quinone_OxRdtase_chainI"/>
</dbReference>
<dbReference type="InterPro" id="IPR004497">
    <property type="entry name" value="NDHI"/>
</dbReference>
<dbReference type="NCBIfam" id="TIGR00403">
    <property type="entry name" value="ndhI"/>
    <property type="match status" value="1"/>
</dbReference>
<dbReference type="NCBIfam" id="TIGR01971">
    <property type="entry name" value="NuoI"/>
    <property type="match status" value="1"/>
</dbReference>
<dbReference type="NCBIfam" id="NF004537">
    <property type="entry name" value="PRK05888.1-3"/>
    <property type="match status" value="1"/>
</dbReference>
<dbReference type="PANTHER" id="PTHR47275">
    <property type="entry name" value="NAD(P)H-QUINONE OXIDOREDUCTASE SUBUNIT I, CHLOROPLASTIC"/>
    <property type="match status" value="1"/>
</dbReference>
<dbReference type="PANTHER" id="PTHR47275:SF1">
    <property type="entry name" value="NAD(P)H-QUINONE OXIDOREDUCTASE SUBUNIT I, CHLOROPLASTIC"/>
    <property type="match status" value="1"/>
</dbReference>
<dbReference type="Pfam" id="PF12838">
    <property type="entry name" value="Fer4_7"/>
    <property type="match status" value="1"/>
</dbReference>
<dbReference type="SUPFAM" id="SSF54862">
    <property type="entry name" value="4Fe-4S ferredoxins"/>
    <property type="match status" value="1"/>
</dbReference>
<dbReference type="PROSITE" id="PS00198">
    <property type="entry name" value="4FE4S_FER_1"/>
    <property type="match status" value="2"/>
</dbReference>
<dbReference type="PROSITE" id="PS51379">
    <property type="entry name" value="4FE4S_FER_2"/>
    <property type="match status" value="2"/>
</dbReference>
<reference key="1">
    <citation type="journal article" date="2011" name="MBio">
        <title>Novel metabolic attributes of the genus Cyanothece, comprising a group of unicellular nitrogen-fixing Cyanobacteria.</title>
        <authorList>
            <person name="Bandyopadhyay A."/>
            <person name="Elvitigala T."/>
            <person name="Welsh E."/>
            <person name="Stockel J."/>
            <person name="Liberton M."/>
            <person name="Min H."/>
            <person name="Sherman L.A."/>
            <person name="Pakrasi H.B."/>
        </authorList>
    </citation>
    <scope>NUCLEOTIDE SEQUENCE [LARGE SCALE GENOMIC DNA]</scope>
    <source>
        <strain>PCC 8801 / RF-1</strain>
    </source>
</reference>
<feature type="chain" id="PRO_1000143641" description="NAD(P)H-quinone oxidoreductase subunit I">
    <location>
        <begin position="1"/>
        <end position="193"/>
    </location>
</feature>
<feature type="domain" description="4Fe-4S ferredoxin-type 1" evidence="1">
    <location>
        <begin position="55"/>
        <end position="84"/>
    </location>
</feature>
<feature type="domain" description="4Fe-4S ferredoxin-type 2" evidence="1">
    <location>
        <begin position="95"/>
        <end position="124"/>
    </location>
</feature>
<feature type="region of interest" description="Disordered" evidence="2">
    <location>
        <begin position="169"/>
        <end position="193"/>
    </location>
</feature>
<feature type="binding site" evidence="1">
    <location>
        <position position="64"/>
    </location>
    <ligand>
        <name>[4Fe-4S] cluster</name>
        <dbReference type="ChEBI" id="CHEBI:49883"/>
        <label>1</label>
    </ligand>
</feature>
<feature type="binding site" evidence="1">
    <location>
        <position position="67"/>
    </location>
    <ligand>
        <name>[4Fe-4S] cluster</name>
        <dbReference type="ChEBI" id="CHEBI:49883"/>
        <label>1</label>
    </ligand>
</feature>
<feature type="binding site" evidence="1">
    <location>
        <position position="70"/>
    </location>
    <ligand>
        <name>[4Fe-4S] cluster</name>
        <dbReference type="ChEBI" id="CHEBI:49883"/>
        <label>1</label>
    </ligand>
</feature>
<feature type="binding site" evidence="1">
    <location>
        <position position="74"/>
    </location>
    <ligand>
        <name>[4Fe-4S] cluster</name>
        <dbReference type="ChEBI" id="CHEBI:49883"/>
        <label>2</label>
    </ligand>
</feature>
<feature type="binding site" evidence="1">
    <location>
        <position position="104"/>
    </location>
    <ligand>
        <name>[4Fe-4S] cluster</name>
        <dbReference type="ChEBI" id="CHEBI:49883"/>
        <label>2</label>
    </ligand>
</feature>
<feature type="binding site" evidence="1">
    <location>
        <position position="107"/>
    </location>
    <ligand>
        <name>[4Fe-4S] cluster</name>
        <dbReference type="ChEBI" id="CHEBI:49883"/>
        <label>2</label>
    </ligand>
</feature>
<feature type="binding site" evidence="1">
    <location>
        <position position="110"/>
    </location>
    <ligand>
        <name>[4Fe-4S] cluster</name>
        <dbReference type="ChEBI" id="CHEBI:49883"/>
        <label>2</label>
    </ligand>
</feature>
<feature type="binding site" evidence="1">
    <location>
        <position position="114"/>
    </location>
    <ligand>
        <name>[4Fe-4S] cluster</name>
        <dbReference type="ChEBI" id="CHEBI:49883"/>
        <label>1</label>
    </ligand>
</feature>